<sequence length="484" mass="54564">MYDDSYVPGFEDSEAGSADSYTSRPSLDSDVSLEEDRESARREVESQAQQQLERAKHKPVAFAVRTNVSYCGVLDEECPVQGSGVNFEAKDFLHIKEKYSNDWWIGRLVKEGGDIAFIPSPQRLESIRLKQEQKARRSGNPSSLSDIGNRRSPPPSLAKQKQKQAEHVPPYDVVPSMRPVVLVGPSLKGYEVTDMMQKALFDFLKHRFDGRISITRVTADLSLAKRSVLNNPGKRTIIERSSARSSIAEVQSEIERIFELAKSLQLVVLDADTINHPAQLAKTSLAPIIVFVKVSSPKVLQRLIRSRGKSQMKHLTVQMMAYDKLVQCPPESFDVILDENQLDDACEHLAEYLEVYWRATHHPAPGPGMLGPPSAIPGLQNQQLLGERGEEHSPLERDSLMPSDEASESSRQAWTGSSQRSSRHLEEDYADAYQDLYQPHRQHTSGLPSANGHDPQDRLLAQDSEHDHNDRNWQRNRPWPKDSY</sequence>
<gene>
    <name type="primary">Cacnb3</name>
    <name type="synonym">Cacnlb3</name>
</gene>
<protein>
    <recommendedName>
        <fullName>Voltage-dependent L-type calcium channel subunit beta-3</fullName>
        <shortName>CAB3</shortName>
    </recommendedName>
    <alternativeName>
        <fullName>Calcium channel voltage-dependent subunit beta 3</fullName>
    </alternativeName>
</protein>
<name>CACB3_RAT</name>
<comment type="function">
    <text evidence="2 5 6 7 8 9">Regulatory subunit of the voltage-gated calcium channel that gives rise to L-type calcium currents (PubMed:10666413, PubMed:15170217, PubMed:24751537, PubMed:29742403, PubMed:7679112). Increases CACNA1B peak calcium current and shifts the voltage dependencies of channel activation and inactivation (By similarity). Increases CACNA1C peak calcium current and shifts the voltage dependencies of channel activation and inactivation (PubMed:10666413, PubMed:15170217, PubMed:24751537, PubMed:29742403, PubMed:7679112).</text>
</comment>
<comment type="subunit">
    <text evidence="1 7 11 12 13 14">Component of a calcium channel complex consisting of a pore-forming alpha subunit (CACNA1C) and the ancillary subunits CACNB3 and CACNA2D1 (Probable). The channel complex contains alpha, beta, gamma and delta subunits in a 1:1:1:1 ratio (Probable). Interacts with CACNA2D4. Interacts with FASLG (By similarity). Interacts with CBARP; prevents the interaction of CACNB3 with the alpha subunit CACNA1C thereby negatively regulating the activity of the corresponding calcium channel (PubMed:24751537).</text>
</comment>
<comment type="interaction">
    <interactant intactId="EBI-8028596">
        <id>P54287</id>
    </interactant>
    <interactant intactId="EBI-744104">
        <id>P55040</id>
        <label>GEM</label>
    </interactant>
    <organismsDiffer>true</organismsDiffer>
    <experiments>2</experiments>
</comment>
<comment type="subcellular location">
    <subcellularLocation>
        <location evidence="11">Cytoplasm</location>
    </subcellularLocation>
</comment>
<comment type="tissue specificity">
    <text evidence="9">Detected in brain.</text>
</comment>
<comment type="similarity">
    <text evidence="10">Belongs to the calcium channel beta subunit family.</text>
</comment>
<keyword id="KW-0002">3D-structure</keyword>
<keyword id="KW-0106">Calcium</keyword>
<keyword id="KW-0107">Calcium channel</keyword>
<keyword id="KW-0109">Calcium transport</keyword>
<keyword id="KW-0963">Cytoplasm</keyword>
<keyword id="KW-0407">Ion channel</keyword>
<keyword id="KW-0406">Ion transport</keyword>
<keyword id="KW-0597">Phosphoprotein</keyword>
<keyword id="KW-1185">Reference proteome</keyword>
<keyword id="KW-0728">SH3 domain</keyword>
<keyword id="KW-0813">Transport</keyword>
<keyword id="KW-0851">Voltage-gated channel</keyword>
<dbReference type="EMBL" id="M88751">
    <property type="protein sequence ID" value="AAA18486.1"/>
    <property type="molecule type" value="mRNA"/>
</dbReference>
<dbReference type="PIR" id="A46608">
    <property type="entry name" value="A46608"/>
</dbReference>
<dbReference type="RefSeq" id="NP_036960.1">
    <property type="nucleotide sequence ID" value="NM_012828.3"/>
</dbReference>
<dbReference type="PDB" id="1VYT">
    <property type="method" value="X-ray"/>
    <property type="resolution" value="2.60 A"/>
    <property type="chains" value="A/B=16-366"/>
</dbReference>
<dbReference type="PDB" id="1VYU">
    <property type="method" value="X-ray"/>
    <property type="resolution" value="2.30 A"/>
    <property type="chains" value="A/B=16-366"/>
</dbReference>
<dbReference type="PDBsum" id="1VYT"/>
<dbReference type="PDBsum" id="1VYU"/>
<dbReference type="SMR" id="P54287"/>
<dbReference type="BioGRID" id="247336">
    <property type="interactions" value="3"/>
</dbReference>
<dbReference type="CORUM" id="P54287"/>
<dbReference type="DIP" id="DIP-59370N"/>
<dbReference type="FunCoup" id="P54287">
    <property type="interactions" value="1339"/>
</dbReference>
<dbReference type="IntAct" id="P54287">
    <property type="interactions" value="3"/>
</dbReference>
<dbReference type="MINT" id="P54287"/>
<dbReference type="STRING" id="10116.ENSRNOP00000073026"/>
<dbReference type="BindingDB" id="P54287"/>
<dbReference type="ChEMBL" id="CHEMBL3137269"/>
<dbReference type="ChEMBL" id="CHEMBL3137270"/>
<dbReference type="ChEMBL" id="CHEMBL4296086"/>
<dbReference type="iPTMnet" id="P54287"/>
<dbReference type="PhosphoSitePlus" id="P54287"/>
<dbReference type="PaxDb" id="10116-ENSRNOP00000017490"/>
<dbReference type="Ensembl" id="ENSRNOT00000081206.2">
    <property type="protein sequence ID" value="ENSRNOP00000073026.1"/>
    <property type="gene ID" value="ENSRNOG00000054274.2"/>
</dbReference>
<dbReference type="GeneID" id="25297"/>
<dbReference type="KEGG" id="rno:25297"/>
<dbReference type="UCSC" id="RGD:2248">
    <property type="organism name" value="rat"/>
</dbReference>
<dbReference type="AGR" id="RGD:2248"/>
<dbReference type="CTD" id="784"/>
<dbReference type="RGD" id="2248">
    <property type="gene designation" value="Cacnb3"/>
</dbReference>
<dbReference type="eggNOG" id="KOG3812">
    <property type="taxonomic scope" value="Eukaryota"/>
</dbReference>
<dbReference type="GeneTree" id="ENSGT00950000182837"/>
<dbReference type="HOGENOM" id="CLU_021995_0_1_1"/>
<dbReference type="InParanoid" id="P54287"/>
<dbReference type="OrthoDB" id="5962384at2759"/>
<dbReference type="PhylomeDB" id="P54287"/>
<dbReference type="TreeFam" id="TF316195"/>
<dbReference type="Reactome" id="R-RNO-112308">
    <property type="pathway name" value="Presynaptic depolarization and calcium channel opening"/>
</dbReference>
<dbReference type="Reactome" id="R-RNO-422356">
    <property type="pathway name" value="Regulation of insulin secretion"/>
</dbReference>
<dbReference type="EvolutionaryTrace" id="P54287"/>
<dbReference type="PRO" id="PR:P54287"/>
<dbReference type="Proteomes" id="UP000002494">
    <property type="component" value="Chromosome 7"/>
</dbReference>
<dbReference type="Bgee" id="ENSRNOG00000054274">
    <property type="expression patterns" value="Expressed in frontal cortex and 19 other cell types or tissues"/>
</dbReference>
<dbReference type="GO" id="GO:0016324">
    <property type="term" value="C:apical plasma membrane"/>
    <property type="evidence" value="ECO:0000314"/>
    <property type="project" value="RGD"/>
</dbReference>
<dbReference type="GO" id="GO:0005737">
    <property type="term" value="C:cytoplasm"/>
    <property type="evidence" value="ECO:0007669"/>
    <property type="project" value="UniProtKB-SubCell"/>
</dbReference>
<dbReference type="GO" id="GO:1990454">
    <property type="term" value="C:L-type voltage-gated calcium channel complex"/>
    <property type="evidence" value="ECO:0000314"/>
    <property type="project" value="UniProtKB"/>
</dbReference>
<dbReference type="GO" id="GO:0016020">
    <property type="term" value="C:membrane"/>
    <property type="evidence" value="ECO:0000266"/>
    <property type="project" value="RGD"/>
</dbReference>
<dbReference type="GO" id="GO:0045202">
    <property type="term" value="C:synapse"/>
    <property type="evidence" value="ECO:0007669"/>
    <property type="project" value="GOC"/>
</dbReference>
<dbReference type="GO" id="GO:0005891">
    <property type="term" value="C:voltage-gated calcium channel complex"/>
    <property type="evidence" value="ECO:0000314"/>
    <property type="project" value="RGD"/>
</dbReference>
<dbReference type="GO" id="GO:0005246">
    <property type="term" value="F:calcium channel regulator activity"/>
    <property type="evidence" value="ECO:0000314"/>
    <property type="project" value="BHF-UCL"/>
</dbReference>
<dbReference type="GO" id="GO:0008331">
    <property type="term" value="F:high voltage-gated calcium channel activity"/>
    <property type="evidence" value="ECO:0000318"/>
    <property type="project" value="GO_Central"/>
</dbReference>
<dbReference type="GO" id="GO:0019901">
    <property type="term" value="F:protein kinase binding"/>
    <property type="evidence" value="ECO:0000314"/>
    <property type="project" value="RGD"/>
</dbReference>
<dbReference type="GO" id="GO:0005245">
    <property type="term" value="F:voltage-gated calcium channel activity"/>
    <property type="evidence" value="ECO:0000315"/>
    <property type="project" value="RGD"/>
</dbReference>
<dbReference type="GO" id="GO:0070588">
    <property type="term" value="P:calcium ion transmembrane transport"/>
    <property type="evidence" value="ECO:0000314"/>
    <property type="project" value="BHF-UCL"/>
</dbReference>
<dbReference type="GO" id="GO:0061577">
    <property type="term" value="P:calcium ion transmembrane transport via high voltage-gated calcium channel"/>
    <property type="evidence" value="ECO:0000314"/>
    <property type="project" value="UniProtKB"/>
</dbReference>
<dbReference type="GO" id="GO:0006816">
    <property type="term" value="P:calcium ion transport"/>
    <property type="evidence" value="ECO:0000266"/>
    <property type="project" value="RGD"/>
</dbReference>
<dbReference type="GO" id="GO:0060402">
    <property type="term" value="P:calcium ion transport into cytosol"/>
    <property type="evidence" value="ECO:0000314"/>
    <property type="project" value="BHF-UCL"/>
</dbReference>
<dbReference type="GO" id="GO:0071456">
    <property type="term" value="P:cellular response to hypoxia"/>
    <property type="evidence" value="ECO:0000270"/>
    <property type="project" value="RGD"/>
</dbReference>
<dbReference type="GO" id="GO:0007268">
    <property type="term" value="P:chemical synaptic transmission"/>
    <property type="evidence" value="ECO:0000318"/>
    <property type="project" value="GO_Central"/>
</dbReference>
<dbReference type="GO" id="GO:0050966">
    <property type="term" value="P:detection of mechanical stimulus involved in sensory perception of pain"/>
    <property type="evidence" value="ECO:0000315"/>
    <property type="project" value="RGD"/>
</dbReference>
<dbReference type="GO" id="GO:1905788">
    <property type="term" value="P:negative regulation of detection of mechanical stimulus involved in sensory perception of touch"/>
    <property type="evidence" value="ECO:0000315"/>
    <property type="project" value="RGD"/>
</dbReference>
<dbReference type="GO" id="GO:2000463">
    <property type="term" value="P:positive regulation of excitatory postsynaptic potential"/>
    <property type="evidence" value="ECO:0000315"/>
    <property type="project" value="RGD"/>
</dbReference>
<dbReference type="GO" id="GO:1901843">
    <property type="term" value="P:positive regulation of high voltage-gated calcium channel activity"/>
    <property type="evidence" value="ECO:0000315"/>
    <property type="project" value="UniProtKB"/>
</dbReference>
<dbReference type="GO" id="GO:0090314">
    <property type="term" value="P:positive regulation of protein targeting to membrane"/>
    <property type="evidence" value="ECO:0000315"/>
    <property type="project" value="RGD"/>
</dbReference>
<dbReference type="GO" id="GO:0072659">
    <property type="term" value="P:protein localization to plasma membrane"/>
    <property type="evidence" value="ECO:0000314"/>
    <property type="project" value="BHF-UCL"/>
</dbReference>
<dbReference type="GO" id="GO:1902630">
    <property type="term" value="P:regulation of membrane hyperpolarization"/>
    <property type="evidence" value="ECO:0000314"/>
    <property type="project" value="RGD"/>
</dbReference>
<dbReference type="GO" id="GO:0098903">
    <property type="term" value="P:regulation of membrane repolarization during action potential"/>
    <property type="evidence" value="ECO:0000314"/>
    <property type="project" value="BHF-UCL"/>
</dbReference>
<dbReference type="GO" id="GO:0050852">
    <property type="term" value="P:T cell receptor signaling pathway"/>
    <property type="evidence" value="ECO:0000266"/>
    <property type="project" value="RGD"/>
</dbReference>
<dbReference type="CDD" id="cd12042">
    <property type="entry name" value="SH3_CACNB3"/>
    <property type="match status" value="1"/>
</dbReference>
<dbReference type="FunFam" id="3.40.50.300:FF:000023">
    <property type="entry name" value="Voltage-dependent L-type calcium channel subunit beta-2"/>
    <property type="match status" value="1"/>
</dbReference>
<dbReference type="FunFam" id="2.30.30.40:FF:000049">
    <property type="entry name" value="Voltage-dependent L-type calcium channel subunit beta-3"/>
    <property type="match status" value="1"/>
</dbReference>
<dbReference type="Gene3D" id="3.40.50.300">
    <property type="entry name" value="P-loop containing nucleotide triphosphate hydrolases"/>
    <property type="match status" value="1"/>
</dbReference>
<dbReference type="Gene3D" id="2.30.30.40">
    <property type="entry name" value="SH3 Domains"/>
    <property type="match status" value="1"/>
</dbReference>
<dbReference type="InterPro" id="IPR046937">
    <property type="entry name" value="CAB1-4_N_A-dom"/>
</dbReference>
<dbReference type="InterPro" id="IPR035760">
    <property type="entry name" value="CACNB3_SH3"/>
</dbReference>
<dbReference type="InterPro" id="IPR008145">
    <property type="entry name" value="GK/Ca_channel_bsu"/>
</dbReference>
<dbReference type="InterPro" id="IPR027417">
    <property type="entry name" value="P-loop_NTPase"/>
</dbReference>
<dbReference type="InterPro" id="IPR036028">
    <property type="entry name" value="SH3-like_dom_sf"/>
</dbReference>
<dbReference type="InterPro" id="IPR001452">
    <property type="entry name" value="SH3_domain"/>
</dbReference>
<dbReference type="InterPro" id="IPR008079">
    <property type="entry name" value="VDCC_L_b3su"/>
</dbReference>
<dbReference type="InterPro" id="IPR000584">
    <property type="entry name" value="VDCC_L_bsu"/>
</dbReference>
<dbReference type="PANTHER" id="PTHR11824">
    <property type="entry name" value="VOLTAGE-DEPENDENT CALCIUM CHANNEL BETA SUBUNIT"/>
    <property type="match status" value="1"/>
</dbReference>
<dbReference type="Pfam" id="PF00625">
    <property type="entry name" value="Guanylate_kin"/>
    <property type="match status" value="1"/>
</dbReference>
<dbReference type="Pfam" id="PF12052">
    <property type="entry name" value="VGCC_beta4Aa_N"/>
    <property type="match status" value="1"/>
</dbReference>
<dbReference type="PRINTS" id="PR01626">
    <property type="entry name" value="LCACHANNELB"/>
</dbReference>
<dbReference type="PRINTS" id="PR01696">
    <property type="entry name" value="LCACHANNELB3"/>
</dbReference>
<dbReference type="SMART" id="SM00072">
    <property type="entry name" value="GuKc"/>
    <property type="match status" value="1"/>
</dbReference>
<dbReference type="SUPFAM" id="SSF52540">
    <property type="entry name" value="P-loop containing nucleoside triphosphate hydrolases"/>
    <property type="match status" value="1"/>
</dbReference>
<dbReference type="SUPFAM" id="SSF50044">
    <property type="entry name" value="SH3-domain"/>
    <property type="match status" value="1"/>
</dbReference>
<dbReference type="PROSITE" id="PS50002">
    <property type="entry name" value="SH3"/>
    <property type="match status" value="1"/>
</dbReference>
<reference key="1">
    <citation type="journal article" date="1993" name="J. Biol. Chem.">
        <title>Cloning and expression of a third calcium channel beta subunit.</title>
        <authorList>
            <person name="Castellano A."/>
            <person name="Wei X."/>
            <person name="Birnbaumer L."/>
            <person name="Perez-Reyes E."/>
        </authorList>
    </citation>
    <scope>NUCLEOTIDE SEQUENCE [MRNA]</scope>
    <scope>FUNCTION</scope>
    <scope>SUBUNIT</scope>
    <scope>TISSUE SPECIFICITY</scope>
    <source>
        <tissue>Brain</tissue>
    </source>
</reference>
<reference key="2">
    <citation type="journal article" date="2000" name="Circ. Res.">
        <title>Ca(2+) channel modulation by recombinant auxiliary beta subunits expressed in young adult heart cells.</title>
        <authorList>
            <person name="Wei S.K."/>
            <person name="Colecraft H.M."/>
            <person name="DeMaria C.D."/>
            <person name="Peterson B.Z."/>
            <person name="Zhang R."/>
            <person name="Kohout T.A."/>
            <person name="Rogers T.B."/>
            <person name="Yue D.T."/>
        </authorList>
    </citation>
    <scope>FUNCTION</scope>
    <scope>SUBUNIT</scope>
    <scope>SUBCELLULAR LOCATION</scope>
</reference>
<reference key="3">
    <citation type="journal article" date="2012" name="Nat. Commun.">
        <title>Quantitative maps of protein phosphorylation sites across 14 different rat organs and tissues.</title>
        <authorList>
            <person name="Lundby A."/>
            <person name="Secher A."/>
            <person name="Lage K."/>
            <person name="Nordsborg N.B."/>
            <person name="Dmytriyev A."/>
            <person name="Lundby C."/>
            <person name="Olsen J.V."/>
        </authorList>
    </citation>
    <scope>PHOSPHORYLATION [LARGE SCALE ANALYSIS] AT SER-152 AND SER-393</scope>
    <scope>IDENTIFICATION BY MASS SPECTROMETRY [LARGE SCALE ANALYSIS]</scope>
</reference>
<reference key="4">
    <citation type="journal article" date="2014" name="J. Cell Biol.">
        <title>BARP suppresses voltage-gated calcium channel activity and Ca2+-evoked exocytosis.</title>
        <authorList>
            <person name="Beguin P."/>
            <person name="Nagashima K."/>
            <person name="Mahalakshmi R.N."/>
            <person name="Vigot R."/>
            <person name="Matsunaga A."/>
            <person name="Miki T."/>
            <person name="Ng M.Y."/>
            <person name="Ng Y.J."/>
            <person name="Lim C.H."/>
            <person name="Tay H.S."/>
            <person name="Hwang L.A."/>
            <person name="Firsov D."/>
            <person name="Tang B.L."/>
            <person name="Inagaki N."/>
            <person name="Mori Y."/>
            <person name="Seino S."/>
            <person name="Launey T."/>
            <person name="Hunziker W."/>
        </authorList>
    </citation>
    <scope>INTERACTION WITH CBARP AND CACNA1C</scope>
    <scope>FUNCTION</scope>
</reference>
<reference key="5">
    <citation type="journal article" date="2018" name="Biophys. J.">
        <title>Alternative Splicing at N Terminus and Domain I Modulates CaV1.2 Inactivation and Surface Expression.</title>
        <authorList>
            <person name="Bartels P."/>
            <person name="Yu D."/>
            <person name="Huang H."/>
            <person name="Hu Z."/>
            <person name="Herzig S."/>
            <person name="Soong T.W."/>
        </authorList>
    </citation>
    <scope>FUNCTION</scope>
    <scope>INTERACTION WITH CACNA1C</scope>
    <scope>SUBUNIT</scope>
</reference>
<reference key="6">
    <citation type="journal article" date="2004" name="Nature">
        <title>Structural basis of the alpha1-beta subunit interaction of voltage-gated Ca2+ channels.</title>
        <authorList>
            <person name="Chen Y.H."/>
            <person name="Li M.H."/>
            <person name="Zhang Y."/>
            <person name="He L.L."/>
            <person name="Yamada Y."/>
            <person name="Fitzmaurice A."/>
            <person name="Shen Y."/>
            <person name="Zhang H."/>
            <person name="Tong L."/>
            <person name="Yang J."/>
        </authorList>
    </citation>
    <scope>X-RAY CRYSTALLOGRAPHY (2.30 ANGSTROMS) OF 16-366 ALONE AND IN COMPLEX WITH CACNA1C</scope>
    <scope>SUBUNIT</scope>
    <scope>FUNCTION</scope>
    <scope>REGION</scope>
</reference>
<proteinExistence type="evidence at protein level"/>
<accession>P54287</accession>
<evidence type="ECO:0000250" key="1">
    <source>
        <dbReference type="UniProtKB" id="P54284"/>
    </source>
</evidence>
<evidence type="ECO:0000250" key="2">
    <source>
        <dbReference type="UniProtKB" id="Q9MZL3"/>
    </source>
</evidence>
<evidence type="ECO:0000255" key="3">
    <source>
        <dbReference type="PROSITE-ProRule" id="PRU00192"/>
    </source>
</evidence>
<evidence type="ECO:0000256" key="4">
    <source>
        <dbReference type="SAM" id="MobiDB-lite"/>
    </source>
</evidence>
<evidence type="ECO:0000269" key="5">
    <source>
    </source>
</evidence>
<evidence type="ECO:0000269" key="6">
    <source>
    </source>
</evidence>
<evidence type="ECO:0000269" key="7">
    <source>
    </source>
</evidence>
<evidence type="ECO:0000269" key="8">
    <source>
    </source>
</evidence>
<evidence type="ECO:0000269" key="9">
    <source>
    </source>
</evidence>
<evidence type="ECO:0000305" key="10"/>
<evidence type="ECO:0000305" key="11">
    <source>
    </source>
</evidence>
<evidence type="ECO:0000305" key="12">
    <source>
    </source>
</evidence>
<evidence type="ECO:0000305" key="13">
    <source>
    </source>
</evidence>
<evidence type="ECO:0000305" key="14">
    <source>
    </source>
</evidence>
<evidence type="ECO:0007744" key="15">
    <source>
    </source>
</evidence>
<evidence type="ECO:0007829" key="16">
    <source>
        <dbReference type="PDB" id="1VYT"/>
    </source>
</evidence>
<evidence type="ECO:0007829" key="17">
    <source>
        <dbReference type="PDB" id="1VYU"/>
    </source>
</evidence>
<organism>
    <name type="scientific">Rattus norvegicus</name>
    <name type="common">Rat</name>
    <dbReference type="NCBI Taxonomy" id="10116"/>
    <lineage>
        <taxon>Eukaryota</taxon>
        <taxon>Metazoa</taxon>
        <taxon>Chordata</taxon>
        <taxon>Craniata</taxon>
        <taxon>Vertebrata</taxon>
        <taxon>Euteleostomi</taxon>
        <taxon>Mammalia</taxon>
        <taxon>Eutheria</taxon>
        <taxon>Euarchontoglires</taxon>
        <taxon>Glires</taxon>
        <taxon>Rodentia</taxon>
        <taxon>Myomorpha</taxon>
        <taxon>Muroidea</taxon>
        <taxon>Muridae</taxon>
        <taxon>Murinae</taxon>
        <taxon>Rattus</taxon>
    </lineage>
</organism>
<feature type="chain" id="PRO_0000144059" description="Voltage-dependent L-type calcium channel subunit beta-3">
    <location>
        <begin position="1"/>
        <end position="484"/>
    </location>
</feature>
<feature type="domain" description="SH3" evidence="3">
    <location>
        <begin position="59"/>
        <end position="128"/>
    </location>
</feature>
<feature type="region of interest" description="Disordered" evidence="4">
    <location>
        <begin position="1"/>
        <end position="52"/>
    </location>
</feature>
<feature type="region of interest" description="Disordered" evidence="4">
    <location>
        <begin position="129"/>
        <end position="170"/>
    </location>
</feature>
<feature type="region of interest" description="Mediates interaction with the alpha subunit" evidence="6">
    <location>
        <begin position="195"/>
        <end position="345"/>
    </location>
</feature>
<feature type="region of interest" description="Disordered" evidence="4">
    <location>
        <begin position="388"/>
        <end position="484"/>
    </location>
</feature>
<feature type="compositionally biased region" description="Basic and acidic residues" evidence="4">
    <location>
        <begin position="388"/>
        <end position="399"/>
    </location>
</feature>
<feature type="compositionally biased region" description="Polar residues" evidence="4">
    <location>
        <begin position="409"/>
        <end position="420"/>
    </location>
</feature>
<feature type="compositionally biased region" description="Basic and acidic residues" evidence="4">
    <location>
        <begin position="463"/>
        <end position="484"/>
    </location>
</feature>
<feature type="modified residue" description="Phosphoserine" evidence="15">
    <location>
        <position position="152"/>
    </location>
</feature>
<feature type="modified residue" description="Phosphoserine" evidence="15">
    <location>
        <position position="393"/>
    </location>
</feature>
<feature type="helix" evidence="17">
    <location>
        <begin position="34"/>
        <end position="38"/>
    </location>
</feature>
<feature type="helix" evidence="17">
    <location>
        <begin position="40"/>
        <end position="55"/>
    </location>
</feature>
<feature type="strand" evidence="17">
    <location>
        <begin position="62"/>
        <end position="68"/>
    </location>
</feature>
<feature type="helix" evidence="17">
    <location>
        <begin position="72"/>
        <end position="74"/>
    </location>
</feature>
<feature type="strand" evidence="17">
    <location>
        <begin position="92"/>
        <end position="98"/>
    </location>
</feature>
<feature type="strand" evidence="17">
    <location>
        <begin position="100"/>
        <end position="110"/>
    </location>
</feature>
<feature type="strand" evidence="17">
    <location>
        <begin position="116"/>
        <end position="119"/>
    </location>
</feature>
<feature type="helix" evidence="17">
    <location>
        <begin position="121"/>
        <end position="131"/>
    </location>
</feature>
<feature type="turn" evidence="17">
    <location>
        <begin position="136"/>
        <end position="138"/>
    </location>
</feature>
<feature type="strand" evidence="17">
    <location>
        <begin position="170"/>
        <end position="174"/>
    </location>
</feature>
<feature type="strand" evidence="17">
    <location>
        <begin position="180"/>
        <end position="183"/>
    </location>
</feature>
<feature type="helix" evidence="17">
    <location>
        <begin position="191"/>
        <end position="207"/>
    </location>
</feature>
<feature type="turn" evidence="17">
    <location>
        <begin position="208"/>
        <end position="210"/>
    </location>
</feature>
<feature type="strand" evidence="17">
    <location>
        <begin position="211"/>
        <end position="217"/>
    </location>
</feature>
<feature type="helix" evidence="17">
    <location>
        <begin position="221"/>
        <end position="223"/>
    </location>
</feature>
<feature type="turn" evidence="16">
    <location>
        <begin position="226"/>
        <end position="228"/>
    </location>
</feature>
<feature type="helix" evidence="16">
    <location>
        <begin position="231"/>
        <end position="239"/>
    </location>
</feature>
<feature type="helix" evidence="16">
    <location>
        <begin position="240"/>
        <end position="242"/>
    </location>
</feature>
<feature type="helix" evidence="17">
    <location>
        <begin position="247"/>
        <end position="262"/>
    </location>
</feature>
<feature type="strand" evidence="17">
    <location>
        <begin position="266"/>
        <end position="271"/>
    </location>
</feature>
<feature type="helix" evidence="17">
    <location>
        <begin position="277"/>
        <end position="279"/>
    </location>
</feature>
<feature type="turn" evidence="17">
    <location>
        <begin position="280"/>
        <end position="282"/>
    </location>
</feature>
<feature type="strand" evidence="17">
    <location>
        <begin position="288"/>
        <end position="292"/>
    </location>
</feature>
<feature type="helix" evidence="17">
    <location>
        <begin position="297"/>
        <end position="305"/>
    </location>
</feature>
<feature type="helix" evidence="17">
    <location>
        <begin position="309"/>
        <end position="312"/>
    </location>
</feature>
<feature type="helix" evidence="17">
    <location>
        <begin position="315"/>
        <end position="326"/>
    </location>
</feature>
<feature type="helix" evidence="17">
    <location>
        <begin position="330"/>
        <end position="332"/>
    </location>
</feature>
<feature type="strand" evidence="17">
    <location>
        <begin position="334"/>
        <end position="337"/>
    </location>
</feature>
<feature type="helix" evidence="17">
    <location>
        <begin position="342"/>
        <end position="360"/>
    </location>
</feature>